<sequence>MNVLLGGLVIFATFVTLCNGSCYVIRHKIVPGETIKECTDLKGNKHPLDSRWRTEDCELCACRDIEISCCSLVSTPVGYDRHNCRKIFNKETCKISVVEKTDPNRPCGVSGWIS</sequence>
<dbReference type="EMBL" id="AJ010154">
    <property type="protein sequence ID" value="CAB38105.1"/>
    <property type="molecule type" value="Genomic_DNA"/>
</dbReference>
<dbReference type="SMR" id="O97935"/>
<dbReference type="GO" id="GO:0005576">
    <property type="term" value="C:extracellular region"/>
    <property type="evidence" value="ECO:0000304"/>
    <property type="project" value="UniProtKB"/>
</dbReference>
<dbReference type="FunFam" id="2.10.70.10:FF:000137">
    <property type="entry name" value="Beta-microseminoprotein"/>
    <property type="match status" value="1"/>
</dbReference>
<dbReference type="FunFam" id="2.20.25.590:FF:000001">
    <property type="entry name" value="Beta-microseminoprotein"/>
    <property type="match status" value="1"/>
</dbReference>
<dbReference type="Gene3D" id="2.20.25.590">
    <property type="match status" value="1"/>
</dbReference>
<dbReference type="Gene3D" id="2.10.70.10">
    <property type="entry name" value="Complement Module, domain 1"/>
    <property type="match status" value="1"/>
</dbReference>
<dbReference type="InterPro" id="IPR008735">
    <property type="entry name" value="PSP94"/>
</dbReference>
<dbReference type="PANTHER" id="PTHR10500">
    <property type="entry name" value="BETA-MICROSEMINOPROTEIN"/>
    <property type="match status" value="1"/>
</dbReference>
<dbReference type="PANTHER" id="PTHR10500:SF8">
    <property type="entry name" value="BETA-MICROSEMINOPROTEIN"/>
    <property type="match status" value="1"/>
</dbReference>
<dbReference type="Pfam" id="PF05825">
    <property type="entry name" value="PSP94"/>
    <property type="match status" value="1"/>
</dbReference>
<accession>O97935</accession>
<evidence type="ECO:0000250" key="1"/>
<evidence type="ECO:0000255" key="2"/>
<evidence type="ECO:0000305" key="3"/>
<evidence type="ECO:0000312" key="4">
    <source>
        <dbReference type="EMBL" id="CAB38105.1"/>
    </source>
</evidence>
<gene>
    <name type="primary">MSPE</name>
</gene>
<keyword id="KW-1015">Disulfide bond</keyword>
<keyword id="KW-0964">Secreted</keyword>
<keyword id="KW-0732">Signal</keyword>
<organism evidence="4">
    <name type="scientific">Saguinus oedipus</name>
    <name type="common">Cotton-top tamarin</name>
    <dbReference type="NCBI Taxonomy" id="9490"/>
    <lineage>
        <taxon>Eukaryota</taxon>
        <taxon>Metazoa</taxon>
        <taxon>Chordata</taxon>
        <taxon>Craniata</taxon>
        <taxon>Vertebrata</taxon>
        <taxon>Euteleostomi</taxon>
        <taxon>Mammalia</taxon>
        <taxon>Eutheria</taxon>
        <taxon>Euarchontoglires</taxon>
        <taxon>Primates</taxon>
        <taxon>Haplorrhini</taxon>
        <taxon>Platyrrhini</taxon>
        <taxon>Cebidae</taxon>
        <taxon>Callitrichinae</taxon>
        <taxon>Saguinus</taxon>
    </lineage>
</organism>
<protein>
    <recommendedName>
        <fullName>Beta-microseminoprotein E1</fullName>
        <shortName>msp-E1</shortName>
    </recommendedName>
</protein>
<name>MSPE_SAGOE</name>
<proteinExistence type="inferred from homology"/>
<reference evidence="3" key="1">
    <citation type="journal article" date="1999" name="Eur. J. Biochem.">
        <title>New world, but not old world, monkeys carry several genes encoding beta-microseminoprotein.</title>
        <authorList>
            <person name="Maekinen M."/>
            <person name="Valtonen-Andre C."/>
            <person name="Lundwall A."/>
        </authorList>
    </citation>
    <scope>NUCLEOTIDE SEQUENCE [GENOMIC DNA]</scope>
</reference>
<comment type="subcellular location">
    <subcellularLocation>
        <location evidence="1">Secreted</location>
    </subcellularLocation>
    <text evidence="1">Sperm surface.</text>
</comment>
<comment type="similarity">
    <text evidence="3">Belongs to the beta-microseminoprotein family.</text>
</comment>
<feature type="signal peptide" evidence="2">
    <location>
        <begin position="1"/>
        <end position="20"/>
    </location>
</feature>
<feature type="chain" id="PRO_0000019275" description="Beta-microseminoprotein E1">
    <location>
        <begin position="21"/>
        <end position="114"/>
    </location>
</feature>
<feature type="disulfide bond" evidence="1">
    <location>
        <begin position="22"/>
        <end position="70"/>
    </location>
</feature>
<feature type="disulfide bond" evidence="1">
    <location>
        <begin position="38"/>
        <end position="62"/>
    </location>
</feature>
<feature type="disulfide bond" evidence="1">
    <location>
        <begin position="57"/>
        <end position="93"/>
    </location>
</feature>
<feature type="disulfide bond" evidence="1">
    <location>
        <begin position="60"/>
        <end position="69"/>
    </location>
</feature>
<feature type="disulfide bond" evidence="1">
    <location>
        <begin position="84"/>
        <end position="107"/>
    </location>
</feature>